<dbReference type="EC" id="2.7.7.85" evidence="1"/>
<dbReference type="EMBL" id="CP001581">
    <property type="protein sequence ID" value="ACO83905.1"/>
    <property type="molecule type" value="Genomic_DNA"/>
</dbReference>
<dbReference type="RefSeq" id="WP_003357541.1">
    <property type="nucleotide sequence ID" value="NC_012563.1"/>
</dbReference>
<dbReference type="SMR" id="C1FNB1"/>
<dbReference type="KEGG" id="cby:CLM_3978"/>
<dbReference type="eggNOG" id="COG1623">
    <property type="taxonomic scope" value="Bacteria"/>
</dbReference>
<dbReference type="HOGENOM" id="CLU_787128_0_0_9"/>
<dbReference type="Proteomes" id="UP000001374">
    <property type="component" value="Chromosome"/>
</dbReference>
<dbReference type="GO" id="GO:0004016">
    <property type="term" value="F:adenylate cyclase activity"/>
    <property type="evidence" value="ECO:0007669"/>
    <property type="project" value="TreeGrafter"/>
</dbReference>
<dbReference type="GO" id="GO:0005524">
    <property type="term" value="F:ATP binding"/>
    <property type="evidence" value="ECO:0007669"/>
    <property type="project" value="UniProtKB-UniRule"/>
</dbReference>
<dbReference type="GO" id="GO:0106408">
    <property type="term" value="F:diadenylate cyclase activity"/>
    <property type="evidence" value="ECO:0007669"/>
    <property type="project" value="UniProtKB-EC"/>
</dbReference>
<dbReference type="GO" id="GO:0003677">
    <property type="term" value="F:DNA binding"/>
    <property type="evidence" value="ECO:0007669"/>
    <property type="project" value="UniProtKB-UniRule"/>
</dbReference>
<dbReference type="GO" id="GO:0006281">
    <property type="term" value="P:DNA repair"/>
    <property type="evidence" value="ECO:0007669"/>
    <property type="project" value="UniProtKB-UniRule"/>
</dbReference>
<dbReference type="FunFam" id="1.10.150.20:FF:000023">
    <property type="entry name" value="DNA integrity scanning protein DisA"/>
    <property type="match status" value="1"/>
</dbReference>
<dbReference type="FunFam" id="3.40.1700.10:FF:000001">
    <property type="entry name" value="DNA integrity scanning protein DisA"/>
    <property type="match status" value="1"/>
</dbReference>
<dbReference type="Gene3D" id="1.10.150.20">
    <property type="entry name" value="5' to 3' exonuclease, C-terminal subdomain"/>
    <property type="match status" value="1"/>
</dbReference>
<dbReference type="Gene3D" id="1.20.1260.110">
    <property type="entry name" value="DNA integrity scanning linker region"/>
    <property type="match status" value="1"/>
</dbReference>
<dbReference type="Gene3D" id="3.40.1700.10">
    <property type="entry name" value="DNA integrity scanning protein, DisA, N-terminal domain"/>
    <property type="match status" value="1"/>
</dbReference>
<dbReference type="HAMAP" id="MF_01438">
    <property type="entry name" value="DisA"/>
    <property type="match status" value="1"/>
</dbReference>
<dbReference type="InterPro" id="IPR050338">
    <property type="entry name" value="DisA"/>
</dbReference>
<dbReference type="InterPro" id="IPR038331">
    <property type="entry name" value="DisA_sf"/>
</dbReference>
<dbReference type="InterPro" id="IPR036888">
    <property type="entry name" value="DNA_integrity_DisA_N_sf"/>
</dbReference>
<dbReference type="InterPro" id="IPR018906">
    <property type="entry name" value="DNA_integrity_scan_DisA_link"/>
</dbReference>
<dbReference type="InterPro" id="IPR003390">
    <property type="entry name" value="DNA_integrity_scan_DisA_N"/>
</dbReference>
<dbReference type="InterPro" id="IPR023763">
    <property type="entry name" value="DNA_integrity_scanning_protein"/>
</dbReference>
<dbReference type="InterPro" id="IPR010994">
    <property type="entry name" value="RuvA_2-like"/>
</dbReference>
<dbReference type="NCBIfam" id="NF010009">
    <property type="entry name" value="PRK13482.1"/>
    <property type="match status" value="1"/>
</dbReference>
<dbReference type="PANTHER" id="PTHR34185">
    <property type="entry name" value="DIADENYLATE CYCLASE"/>
    <property type="match status" value="1"/>
</dbReference>
<dbReference type="PANTHER" id="PTHR34185:SF3">
    <property type="entry name" value="DNA INTEGRITY SCANNING PROTEIN DISA"/>
    <property type="match status" value="1"/>
</dbReference>
<dbReference type="Pfam" id="PF02457">
    <property type="entry name" value="DAC"/>
    <property type="match status" value="1"/>
</dbReference>
<dbReference type="Pfam" id="PF10635">
    <property type="entry name" value="DisA-linker"/>
    <property type="match status" value="1"/>
</dbReference>
<dbReference type="SUPFAM" id="SSF47781">
    <property type="entry name" value="RuvA domain 2-like"/>
    <property type="match status" value="1"/>
</dbReference>
<dbReference type="SUPFAM" id="SSF143597">
    <property type="entry name" value="YojJ-like"/>
    <property type="match status" value="1"/>
</dbReference>
<dbReference type="PROSITE" id="PS51794">
    <property type="entry name" value="DAC"/>
    <property type="match status" value="1"/>
</dbReference>
<protein>
    <recommendedName>
        <fullName evidence="1">DNA integrity scanning protein DisA</fullName>
    </recommendedName>
    <alternativeName>
        <fullName evidence="1">Cyclic di-AMP synthase</fullName>
        <shortName evidence="1">c-di-AMP synthase</shortName>
    </alternativeName>
    <alternativeName>
        <fullName evidence="1">Diadenylate cyclase</fullName>
        <ecNumber evidence="1">2.7.7.85</ecNumber>
    </alternativeName>
</protein>
<organism>
    <name type="scientific">Clostridium botulinum (strain Kyoto / Type A2)</name>
    <dbReference type="NCBI Taxonomy" id="536232"/>
    <lineage>
        <taxon>Bacteria</taxon>
        <taxon>Bacillati</taxon>
        <taxon>Bacillota</taxon>
        <taxon>Clostridia</taxon>
        <taxon>Eubacteriales</taxon>
        <taxon>Clostridiaceae</taxon>
        <taxon>Clostridium</taxon>
    </lineage>
</organism>
<sequence length="353" mass="39641">MRIEKDKELMNILKIMAPGTPLREGLENILRAKTGGLLILGDSDQILKLVDGGFKINSEYSPSYVYELAKMDGSIVLSSDLKKILCANAQLIPDSSIPTFETGTRHRTADRVAKQTGAIVIAISQRRNIITVYKGGIKYVLRDSSIILARANQALQTLEKYVAVLDRVVNNLNILEFKDIATLFDVVTAVQRSEMVMRIVSEIERYICELGNEGRLIDMQLSELIKSVEEDGILLIRDYCRSNMEYEDIYKQIQGLSSEELLNLDGLSKIIGYTGVPLVDTLISPRGYRMINKIPRIPSNVIENLVANFNQLKCVMEASYEQLDNVEGIGEARAKAIKNGLRRLREQIMLDKV</sequence>
<reference key="1">
    <citation type="submission" date="2008-10" db="EMBL/GenBank/DDBJ databases">
        <title>Genome sequence of Clostridium botulinum A2 Kyoto.</title>
        <authorList>
            <person name="Shrivastava S."/>
            <person name="Brinkac L.M."/>
            <person name="Brown J.L."/>
            <person name="Bruce D."/>
            <person name="Detter C.C."/>
            <person name="Johnson E.A."/>
            <person name="Munk C.A."/>
            <person name="Smith L.A."/>
            <person name="Smith T.J."/>
            <person name="Sutton G."/>
            <person name="Brettin T.S."/>
        </authorList>
    </citation>
    <scope>NUCLEOTIDE SEQUENCE [LARGE SCALE GENOMIC DNA]</scope>
    <source>
        <strain>Kyoto / Type A2</strain>
    </source>
</reference>
<proteinExistence type="inferred from homology"/>
<comment type="function">
    <text evidence="1">Participates in a DNA-damage check-point that is active prior to asymmetric division when DNA is damaged. DisA forms globular foci that rapidly scan along the chromosomes during sporulation, searching for lesions. When a lesion is present, DisA pauses at the lesion site. This triggers a cellular response that culminates in a temporary block in sporulation initiation.</text>
</comment>
<comment type="function">
    <text evidence="1">Also has diadenylate cyclase activity, catalyzing the condensation of 2 ATP molecules into cyclic di-AMP (c-di-AMP). c-di-AMP acts as a signaling molecule that couples DNA integrity with progression of sporulation. The rise in c-di-AMP level generated by DisA while scanning the chromosome, operates as a positive signal that advances sporulation; upon encountering a lesion, the DisA focus arrests at the damaged site and halts c-di-AMP synthesis.</text>
</comment>
<comment type="catalytic activity">
    <reaction evidence="1">
        <text>2 ATP = 3',3'-c-di-AMP + 2 diphosphate</text>
        <dbReference type="Rhea" id="RHEA:35655"/>
        <dbReference type="ChEBI" id="CHEBI:30616"/>
        <dbReference type="ChEBI" id="CHEBI:33019"/>
        <dbReference type="ChEBI" id="CHEBI:71500"/>
        <dbReference type="EC" id="2.7.7.85"/>
    </reaction>
</comment>
<comment type="cofactor">
    <cofactor evidence="1">
        <name>Mg(2+)</name>
        <dbReference type="ChEBI" id="CHEBI:18420"/>
    </cofactor>
</comment>
<comment type="subunit">
    <text evidence="1">Homooctamer.</text>
</comment>
<comment type="similarity">
    <text evidence="1">Belongs to the DisA family.</text>
</comment>
<feature type="chain" id="PRO_1000184911" description="DNA integrity scanning protein DisA">
    <location>
        <begin position="1"/>
        <end position="353"/>
    </location>
</feature>
<feature type="domain" description="DAC" evidence="2">
    <location>
        <begin position="6"/>
        <end position="144"/>
    </location>
</feature>
<feature type="binding site" evidence="1">
    <location>
        <position position="73"/>
    </location>
    <ligand>
        <name>ATP</name>
        <dbReference type="ChEBI" id="CHEBI:30616"/>
    </ligand>
</feature>
<feature type="binding site" evidence="1">
    <location>
        <position position="91"/>
    </location>
    <ligand>
        <name>ATP</name>
        <dbReference type="ChEBI" id="CHEBI:30616"/>
    </ligand>
</feature>
<feature type="binding site" evidence="1">
    <location>
        <begin position="104"/>
        <end position="108"/>
    </location>
    <ligand>
        <name>ATP</name>
        <dbReference type="ChEBI" id="CHEBI:30616"/>
    </ligand>
</feature>
<name>DISA_CLOBJ</name>
<keyword id="KW-0067">ATP-binding</keyword>
<keyword id="KW-0227">DNA damage</keyword>
<keyword id="KW-0234">DNA repair</keyword>
<keyword id="KW-0238">DNA-binding</keyword>
<keyword id="KW-0460">Magnesium</keyword>
<keyword id="KW-0547">Nucleotide-binding</keyword>
<keyword id="KW-0548">Nucleotidyltransferase</keyword>
<keyword id="KW-0808">Transferase</keyword>
<evidence type="ECO:0000255" key="1">
    <source>
        <dbReference type="HAMAP-Rule" id="MF_01438"/>
    </source>
</evidence>
<evidence type="ECO:0000255" key="2">
    <source>
        <dbReference type="PROSITE-ProRule" id="PRU01130"/>
    </source>
</evidence>
<accession>C1FNB1</accession>
<gene>
    <name evidence="1" type="primary">disA</name>
    <name type="ordered locus">CLM_3978</name>
</gene>